<accession>A1UIP2</accession>
<keyword id="KW-0378">Hydrolase</keyword>
<organism>
    <name type="scientific">Mycobacterium sp. (strain KMS)</name>
    <dbReference type="NCBI Taxonomy" id="189918"/>
    <lineage>
        <taxon>Bacteria</taxon>
        <taxon>Bacillati</taxon>
        <taxon>Actinomycetota</taxon>
        <taxon>Actinomycetes</taxon>
        <taxon>Mycobacteriales</taxon>
        <taxon>Mycobacteriaceae</taxon>
        <taxon>Mycobacterium</taxon>
    </lineage>
</organism>
<dbReference type="EMBL" id="CP000518">
    <property type="protein sequence ID" value="ABL92700.1"/>
    <property type="molecule type" value="Genomic_DNA"/>
</dbReference>
<dbReference type="SMR" id="A1UIP2"/>
<dbReference type="STRING" id="189918.Mkms_3506"/>
<dbReference type="KEGG" id="mkm:Mkms_3506"/>
<dbReference type="HOGENOM" id="CLU_028163_0_1_11"/>
<dbReference type="OrthoDB" id="9803619at2"/>
<dbReference type="GO" id="GO:0008832">
    <property type="term" value="F:dGTPase activity"/>
    <property type="evidence" value="ECO:0007669"/>
    <property type="project" value="TreeGrafter"/>
</dbReference>
<dbReference type="GO" id="GO:0006203">
    <property type="term" value="P:dGTP catabolic process"/>
    <property type="evidence" value="ECO:0007669"/>
    <property type="project" value="TreeGrafter"/>
</dbReference>
<dbReference type="CDD" id="cd00077">
    <property type="entry name" value="HDc"/>
    <property type="match status" value="1"/>
</dbReference>
<dbReference type="Gene3D" id="1.10.3210.10">
    <property type="entry name" value="Hypothetical protein af1432"/>
    <property type="match status" value="1"/>
</dbReference>
<dbReference type="HAMAP" id="MF_01212">
    <property type="entry name" value="dGTPase_type2"/>
    <property type="match status" value="1"/>
</dbReference>
<dbReference type="InterPro" id="IPR006261">
    <property type="entry name" value="dGTPase"/>
</dbReference>
<dbReference type="InterPro" id="IPR050135">
    <property type="entry name" value="dGTPase-like"/>
</dbReference>
<dbReference type="InterPro" id="IPR023023">
    <property type="entry name" value="dNTPase_2"/>
</dbReference>
<dbReference type="InterPro" id="IPR003607">
    <property type="entry name" value="HD/PDEase_dom"/>
</dbReference>
<dbReference type="InterPro" id="IPR006674">
    <property type="entry name" value="HD_domain"/>
</dbReference>
<dbReference type="InterPro" id="IPR026875">
    <property type="entry name" value="PHydrolase_assoc_dom"/>
</dbReference>
<dbReference type="NCBIfam" id="TIGR01353">
    <property type="entry name" value="dGTP_triPase"/>
    <property type="match status" value="1"/>
</dbReference>
<dbReference type="NCBIfam" id="NF002829">
    <property type="entry name" value="PRK03007.1"/>
    <property type="match status" value="1"/>
</dbReference>
<dbReference type="PANTHER" id="PTHR11373:SF32">
    <property type="entry name" value="DEOXYGUANOSINETRIPHOSPHATE TRIPHOSPHOHYDROLASE"/>
    <property type="match status" value="1"/>
</dbReference>
<dbReference type="PANTHER" id="PTHR11373">
    <property type="entry name" value="DEOXYNUCLEOSIDE TRIPHOSPHATE TRIPHOSPHOHYDROLASE"/>
    <property type="match status" value="1"/>
</dbReference>
<dbReference type="Pfam" id="PF01966">
    <property type="entry name" value="HD"/>
    <property type="match status" value="1"/>
</dbReference>
<dbReference type="Pfam" id="PF13286">
    <property type="entry name" value="HD_assoc"/>
    <property type="match status" value="1"/>
</dbReference>
<dbReference type="SMART" id="SM00471">
    <property type="entry name" value="HDc"/>
    <property type="match status" value="1"/>
</dbReference>
<dbReference type="SUPFAM" id="SSF109604">
    <property type="entry name" value="HD-domain/PDEase-like"/>
    <property type="match status" value="1"/>
</dbReference>
<dbReference type="PROSITE" id="PS51831">
    <property type="entry name" value="HD"/>
    <property type="match status" value="1"/>
</dbReference>
<comment type="similarity">
    <text evidence="1">Belongs to the dGTPase family. Type 2 subfamily.</text>
</comment>
<protein>
    <recommendedName>
        <fullName evidence="1">Deoxyguanosinetriphosphate triphosphohydrolase-like protein</fullName>
    </recommendedName>
</protein>
<evidence type="ECO:0000255" key="1">
    <source>
        <dbReference type="HAMAP-Rule" id="MF_01212"/>
    </source>
</evidence>
<evidence type="ECO:0000255" key="2">
    <source>
        <dbReference type="PROSITE-ProRule" id="PRU01175"/>
    </source>
</evidence>
<evidence type="ECO:0000256" key="3">
    <source>
        <dbReference type="SAM" id="MobiDB-lite"/>
    </source>
</evidence>
<feature type="chain" id="PRO_1000066424" description="Deoxyguanosinetriphosphate triphosphohydrolase-like protein">
    <location>
        <begin position="1"/>
        <end position="423"/>
    </location>
</feature>
<feature type="domain" description="HD" evidence="2">
    <location>
        <begin position="72"/>
        <end position="217"/>
    </location>
</feature>
<feature type="region of interest" description="Disordered" evidence="3">
    <location>
        <begin position="1"/>
        <end position="35"/>
    </location>
</feature>
<feature type="compositionally biased region" description="Basic and acidic residues" evidence="3">
    <location>
        <begin position="11"/>
        <end position="22"/>
    </location>
</feature>
<proteinExistence type="inferred from homology"/>
<gene>
    <name type="ordered locus">Mkms_3506</name>
</gene>
<reference key="1">
    <citation type="submission" date="2006-12" db="EMBL/GenBank/DDBJ databases">
        <title>Complete sequence of chromosome of Mycobacterium sp. KMS.</title>
        <authorList>
            <consortium name="US DOE Joint Genome Institute"/>
            <person name="Copeland A."/>
            <person name="Lucas S."/>
            <person name="Lapidus A."/>
            <person name="Barry K."/>
            <person name="Detter J.C."/>
            <person name="Glavina del Rio T."/>
            <person name="Hammon N."/>
            <person name="Israni S."/>
            <person name="Dalin E."/>
            <person name="Tice H."/>
            <person name="Pitluck S."/>
            <person name="Kiss H."/>
            <person name="Brettin T."/>
            <person name="Bruce D."/>
            <person name="Han C."/>
            <person name="Tapia R."/>
            <person name="Gilna P."/>
            <person name="Schmutz J."/>
            <person name="Larimer F."/>
            <person name="Land M."/>
            <person name="Hauser L."/>
            <person name="Kyrpides N."/>
            <person name="Mikhailova N."/>
            <person name="Miller C.D."/>
            <person name="Richardson P."/>
        </authorList>
    </citation>
    <scope>NUCLEOTIDE SEQUENCE [LARGE SCALE GENOMIC DNA]</scope>
    <source>
        <strain>KMS</strain>
    </source>
</reference>
<sequence length="423" mass="45958">MNPRLQDSYDEFDRQRRVDEPAKSAVLPGTGTEHRTDFARDRARVLHCAALRRLADKTQVVGPREGDTPRTRLTHSLEVAQIGRGMAVGLGCDPDLVDLAGLAHDIGHPPYGHNGERALNEIAKAFGGFEGNAQNFRILTRLEPKVLDATGRSAGLNLTRAALDAVTKYPWQRGDRTKFGFYGDDMAAAWWVRDGAPAERPCLEAQVMDWADDVAYSVHDVEDGVVSGRIDLRVLADDDAAASLARLGAEAFPTLAPDDLLAAAERLSQMPVVSQVGKYDGTLGASVALKRMTSELVGRFANAAITETRSVAGGGALHRFVTELAVPTLVRAEVAVLKMLALQFIMSDHGHLGIQADQRTRIHEVALILWGQAPSSLDPLFAPEFVAAEDDGARLRVVIDQIASYTEGRLERVHEARSPRPLD</sequence>
<name>DGTL1_MYCSK</name>